<feature type="chain" id="PRO_0000305924" description="Casein kinase I isoform gamma-3">
    <location>
        <begin position="1"/>
        <end position="424"/>
    </location>
</feature>
<feature type="domain" description="Protein kinase" evidence="3">
    <location>
        <begin position="43"/>
        <end position="313"/>
    </location>
</feature>
<feature type="region of interest" description="Disordered" evidence="5">
    <location>
        <begin position="1"/>
        <end position="35"/>
    </location>
</feature>
<feature type="region of interest" description="Disordered" evidence="5">
    <location>
        <begin position="337"/>
        <end position="390"/>
    </location>
</feature>
<feature type="compositionally biased region" description="Basic and acidic residues" evidence="5">
    <location>
        <begin position="1"/>
        <end position="16"/>
    </location>
</feature>
<feature type="compositionally biased region" description="Low complexity" evidence="5">
    <location>
        <begin position="19"/>
        <end position="35"/>
    </location>
</feature>
<feature type="compositionally biased region" description="Basic and acidic residues" evidence="5">
    <location>
        <begin position="348"/>
        <end position="358"/>
    </location>
</feature>
<feature type="compositionally biased region" description="Polar residues" evidence="5">
    <location>
        <begin position="359"/>
        <end position="385"/>
    </location>
</feature>
<feature type="active site" description="Proton acceptor" evidence="3 4">
    <location>
        <position position="162"/>
    </location>
</feature>
<feature type="binding site" evidence="3">
    <location>
        <begin position="49"/>
        <end position="57"/>
    </location>
    <ligand>
        <name>ATP</name>
        <dbReference type="ChEBI" id="CHEBI:30616"/>
    </ligand>
</feature>
<feature type="binding site" evidence="3">
    <location>
        <position position="72"/>
    </location>
    <ligand>
        <name>ATP</name>
        <dbReference type="ChEBI" id="CHEBI:30616"/>
    </ligand>
</feature>
<feature type="modified residue" description="N-acetylmethionine" evidence="2">
    <location>
        <position position="1"/>
    </location>
</feature>
<feature type="modified residue" description="Phosphoserine" evidence="8">
    <location>
        <position position="382"/>
    </location>
</feature>
<feature type="sequence conflict" description="In Ref. 2; BAC37932." evidence="7" ref="2">
    <original>NLYTNEYVAIKLEPMKSRAPQLH</original>
    <variation>IVLFIPLCEEQFKNEYTCKRVFL</variation>
    <location>
        <begin position="62"/>
        <end position="84"/>
    </location>
</feature>
<feature type="sequence conflict" description="In Ref. 2." evidence="7" ref="2">
    <original>L</original>
    <variation>V</variation>
    <location>
        <position position="119"/>
    </location>
</feature>
<feature type="sequence conflict" description="In Ref. 2; AK218008." evidence="7" ref="2">
    <original>T</original>
    <variation>A</variation>
    <location>
        <position position="138"/>
    </location>
</feature>
<feature type="sequence conflict" description="In Ref. 2; AK218008." evidence="7" ref="2">
    <original>N</original>
    <variation>K</variation>
    <location>
        <position position="167"/>
    </location>
</feature>
<sequence length="424" mass="48938">MDNKKKDKDKSDDRMARPSGRSGHSTRGTGSSSSGVLMVGPNFRVGKKIGCGNFGELRLGKNLYTNEYVAIKLEPMKSRAPQLHLEYRFYKQLGSGDGIPQVYYFGPCGKYNAMVLELLGPSLEDLFDLCDRTFSLKTVLMIAIQLISRMEYVHSKNLIYRDVKPENFLIGRPGNKAQQVIHIIDFGLAKEYIDPETKKHIPYREHKSLTGTARYMSINTHLGKEQSRRDDLEALGHMFMYFLRGSLPWQGLKADTLKERYQKIGDTKRATPIEVLCENFPEEMATYLRYVRRLDFFEKPDYDYLRKLFTDLFDRKGYMFDYEYDWIGKQLPTPVGAVQQDPALSSNREAHQHRDKIQQSKNQVVSSTNGELNTDDPTAGRSNAPITAPTEVEVMDETNCQKVLNMWCCCFFKRRKRKTIQRHK</sequence>
<keyword id="KW-0007">Acetylation</keyword>
<keyword id="KW-0067">ATP-binding</keyword>
<keyword id="KW-0963">Cytoplasm</keyword>
<keyword id="KW-0418">Kinase</keyword>
<keyword id="KW-0547">Nucleotide-binding</keyword>
<keyword id="KW-0597">Phosphoprotein</keyword>
<keyword id="KW-1185">Reference proteome</keyword>
<keyword id="KW-0723">Serine/threonine-protein kinase</keyword>
<keyword id="KW-0808">Transferase</keyword>
<keyword id="KW-0879">Wnt signaling pathway</keyword>
<organism>
    <name type="scientific">Mus musculus</name>
    <name type="common">Mouse</name>
    <dbReference type="NCBI Taxonomy" id="10090"/>
    <lineage>
        <taxon>Eukaryota</taxon>
        <taxon>Metazoa</taxon>
        <taxon>Chordata</taxon>
        <taxon>Craniata</taxon>
        <taxon>Vertebrata</taxon>
        <taxon>Euteleostomi</taxon>
        <taxon>Mammalia</taxon>
        <taxon>Eutheria</taxon>
        <taxon>Euarchontoglires</taxon>
        <taxon>Glires</taxon>
        <taxon>Rodentia</taxon>
        <taxon>Myomorpha</taxon>
        <taxon>Muroidea</taxon>
        <taxon>Muridae</taxon>
        <taxon>Murinae</taxon>
        <taxon>Mus</taxon>
        <taxon>Mus</taxon>
    </lineage>
</organism>
<dbReference type="EC" id="2.7.11.1"/>
<dbReference type="EMBL" id="AC115124">
    <property type="status" value="NOT_ANNOTATED_CDS"/>
    <property type="molecule type" value="Genomic_DNA"/>
</dbReference>
<dbReference type="EMBL" id="AC127368">
    <property type="status" value="NOT_ANNOTATED_CDS"/>
    <property type="molecule type" value="Genomic_DNA"/>
</dbReference>
<dbReference type="EMBL" id="AK032675">
    <property type="protein sequence ID" value="BAC27983.1"/>
    <property type="molecule type" value="mRNA"/>
</dbReference>
<dbReference type="EMBL" id="AK034842">
    <property type="protein sequence ID" value="BAC28850.1"/>
    <property type="molecule type" value="mRNA"/>
</dbReference>
<dbReference type="EMBL" id="AK080491">
    <property type="protein sequence ID" value="BAC37932.1"/>
    <property type="molecule type" value="mRNA"/>
</dbReference>
<dbReference type="EMBL" id="AK218008">
    <property type="status" value="NOT_ANNOTATED_CDS"/>
    <property type="molecule type" value="mRNA"/>
</dbReference>
<dbReference type="EMBL" id="BC033601">
    <property type="protein sequence ID" value="AAH33601.2"/>
    <property type="molecule type" value="mRNA"/>
</dbReference>
<dbReference type="CCDS" id="CCDS37823.1"/>
<dbReference type="RefSeq" id="NP_690022.2">
    <property type="nucleotide sequence ID" value="NM_152809.2"/>
</dbReference>
<dbReference type="SMR" id="Q8C4X2"/>
<dbReference type="BioGRID" id="214041">
    <property type="interactions" value="1"/>
</dbReference>
<dbReference type="FunCoup" id="Q8C4X2">
    <property type="interactions" value="3591"/>
</dbReference>
<dbReference type="STRING" id="10090.ENSMUSP00000070259"/>
<dbReference type="GlyGen" id="Q8C4X2">
    <property type="glycosylation" value="1 site, 1 N-linked glycan (1 site)"/>
</dbReference>
<dbReference type="iPTMnet" id="Q8C4X2"/>
<dbReference type="PhosphoSitePlus" id="Q8C4X2"/>
<dbReference type="SwissPalm" id="Q8C4X2"/>
<dbReference type="jPOST" id="Q8C4X2"/>
<dbReference type="PaxDb" id="10090-ENSMUSP00000070259"/>
<dbReference type="PeptideAtlas" id="Q8C4X2"/>
<dbReference type="ProteomicsDB" id="269449"/>
<dbReference type="Pumba" id="Q8C4X2"/>
<dbReference type="Antibodypedia" id="25674">
    <property type="antibodies" value="164 antibodies from 28 providers"/>
</dbReference>
<dbReference type="DNASU" id="70425"/>
<dbReference type="Ensembl" id="ENSMUST00000069597.8">
    <property type="protein sequence ID" value="ENSMUSP00000070259.7"/>
    <property type="gene ID" value="ENSMUSG00000073563.4"/>
</dbReference>
<dbReference type="GeneID" id="70425"/>
<dbReference type="KEGG" id="mmu:70425"/>
<dbReference type="UCSC" id="uc008eya.1">
    <property type="organism name" value="mouse"/>
</dbReference>
<dbReference type="AGR" id="MGI:1917675"/>
<dbReference type="CTD" id="1456"/>
<dbReference type="MGI" id="MGI:1917675">
    <property type="gene designation" value="Csnk1g3"/>
</dbReference>
<dbReference type="VEuPathDB" id="HostDB:ENSMUSG00000073563"/>
<dbReference type="eggNOG" id="KOG1165">
    <property type="taxonomic scope" value="Eukaryota"/>
</dbReference>
<dbReference type="GeneTree" id="ENSGT00940000160646"/>
<dbReference type="HOGENOM" id="CLU_019279_2_0_1"/>
<dbReference type="InParanoid" id="Q8C4X2"/>
<dbReference type="OrthoDB" id="5800476at2759"/>
<dbReference type="PhylomeDB" id="Q8C4X2"/>
<dbReference type="TreeFam" id="TF313349"/>
<dbReference type="BioGRID-ORCS" id="70425">
    <property type="hits" value="3 hits in 79 CRISPR screens"/>
</dbReference>
<dbReference type="ChiTaRS" id="Csnk1g3">
    <property type="organism name" value="mouse"/>
</dbReference>
<dbReference type="PRO" id="PR:Q8C4X2"/>
<dbReference type="Proteomes" id="UP000000589">
    <property type="component" value="Chromosome 18"/>
</dbReference>
<dbReference type="RNAct" id="Q8C4X2">
    <property type="molecule type" value="protein"/>
</dbReference>
<dbReference type="Bgee" id="ENSMUSG00000073563">
    <property type="expression patterns" value="Expressed in superior cervical ganglion and 227 other cell types or tissues"/>
</dbReference>
<dbReference type="ExpressionAtlas" id="Q8C4X2">
    <property type="expression patterns" value="baseline and differential"/>
</dbReference>
<dbReference type="GO" id="GO:0005737">
    <property type="term" value="C:cytoplasm"/>
    <property type="evidence" value="ECO:0007669"/>
    <property type="project" value="UniProtKB-SubCell"/>
</dbReference>
<dbReference type="GO" id="GO:0005524">
    <property type="term" value="F:ATP binding"/>
    <property type="evidence" value="ECO:0007669"/>
    <property type="project" value="UniProtKB-KW"/>
</dbReference>
<dbReference type="GO" id="GO:0106310">
    <property type="term" value="F:protein serine kinase activity"/>
    <property type="evidence" value="ECO:0007669"/>
    <property type="project" value="RHEA"/>
</dbReference>
<dbReference type="GO" id="GO:0004674">
    <property type="term" value="F:protein serine/threonine kinase activity"/>
    <property type="evidence" value="ECO:0007669"/>
    <property type="project" value="UniProtKB-KW"/>
</dbReference>
<dbReference type="GO" id="GO:0016055">
    <property type="term" value="P:Wnt signaling pathway"/>
    <property type="evidence" value="ECO:0007669"/>
    <property type="project" value="UniProtKB-KW"/>
</dbReference>
<dbReference type="CDD" id="cd14126">
    <property type="entry name" value="STKc_CK1_gamma"/>
    <property type="match status" value="1"/>
</dbReference>
<dbReference type="FunFam" id="1.10.510.10:FF:001113">
    <property type="entry name" value="Casein kinase 1 gamma 2"/>
    <property type="match status" value="1"/>
</dbReference>
<dbReference type="FunFam" id="3.30.200.20:FF:000018">
    <property type="entry name" value="Casein kinase I isoform gamma-1"/>
    <property type="match status" value="1"/>
</dbReference>
<dbReference type="Gene3D" id="3.30.200.20">
    <property type="entry name" value="Phosphorylase Kinase, domain 1"/>
    <property type="match status" value="1"/>
</dbReference>
<dbReference type="Gene3D" id="1.10.510.10">
    <property type="entry name" value="Transferase(Phosphotransferase) domain 1"/>
    <property type="match status" value="1"/>
</dbReference>
<dbReference type="InterPro" id="IPR022247">
    <property type="entry name" value="Casein_kinase-1_gamma_C"/>
</dbReference>
<dbReference type="InterPro" id="IPR050235">
    <property type="entry name" value="CK1_Ser-Thr_kinase"/>
</dbReference>
<dbReference type="InterPro" id="IPR011009">
    <property type="entry name" value="Kinase-like_dom_sf"/>
</dbReference>
<dbReference type="InterPro" id="IPR000719">
    <property type="entry name" value="Prot_kinase_dom"/>
</dbReference>
<dbReference type="InterPro" id="IPR017441">
    <property type="entry name" value="Protein_kinase_ATP_BS"/>
</dbReference>
<dbReference type="InterPro" id="IPR008271">
    <property type="entry name" value="Ser/Thr_kinase_AS"/>
</dbReference>
<dbReference type="PANTHER" id="PTHR11909">
    <property type="entry name" value="CASEIN KINASE-RELATED"/>
    <property type="match status" value="1"/>
</dbReference>
<dbReference type="Pfam" id="PF12605">
    <property type="entry name" value="CK1gamma_C"/>
    <property type="match status" value="2"/>
</dbReference>
<dbReference type="Pfam" id="PF00069">
    <property type="entry name" value="Pkinase"/>
    <property type="match status" value="1"/>
</dbReference>
<dbReference type="SMART" id="SM00220">
    <property type="entry name" value="S_TKc"/>
    <property type="match status" value="1"/>
</dbReference>
<dbReference type="SUPFAM" id="SSF56112">
    <property type="entry name" value="Protein kinase-like (PK-like)"/>
    <property type="match status" value="1"/>
</dbReference>
<dbReference type="PROSITE" id="PS00107">
    <property type="entry name" value="PROTEIN_KINASE_ATP"/>
    <property type="match status" value="1"/>
</dbReference>
<dbReference type="PROSITE" id="PS50011">
    <property type="entry name" value="PROTEIN_KINASE_DOM"/>
    <property type="match status" value="1"/>
</dbReference>
<dbReference type="PROSITE" id="PS00108">
    <property type="entry name" value="PROTEIN_KINASE_ST"/>
    <property type="match status" value="1"/>
</dbReference>
<evidence type="ECO:0000250" key="1"/>
<evidence type="ECO:0000250" key="2">
    <source>
        <dbReference type="UniProtKB" id="Q9Y6M4"/>
    </source>
</evidence>
<evidence type="ECO:0000255" key="3">
    <source>
        <dbReference type="PROSITE-ProRule" id="PRU00159"/>
    </source>
</evidence>
<evidence type="ECO:0000255" key="4">
    <source>
        <dbReference type="PROSITE-ProRule" id="PRU10027"/>
    </source>
</evidence>
<evidence type="ECO:0000256" key="5">
    <source>
        <dbReference type="SAM" id="MobiDB-lite"/>
    </source>
</evidence>
<evidence type="ECO:0000269" key="6">
    <source>
    </source>
</evidence>
<evidence type="ECO:0000305" key="7"/>
<evidence type="ECO:0007744" key="8">
    <source>
    </source>
</evidence>
<name>KC1G3_MOUSE</name>
<accession>Q8C4X2</accession>
<accession>Q8BM57</accession>
<accession>Q8C001</accession>
<accession>Q8K079</accession>
<proteinExistence type="evidence at protein level"/>
<protein>
    <recommendedName>
        <fullName>Casein kinase I isoform gamma-3</fullName>
        <shortName>CKI-gamma 3</shortName>
        <ecNumber>2.7.11.1</ecNumber>
    </recommendedName>
</protein>
<comment type="function">
    <text evidence="1 6">Serine/threonine-protein kinase. Casein kinases are operationally defined by their preferential utilization of acidic proteins such as caseins as substrates. It can phosphorylate a large number of proteins. Participates in Wnt signaling (By similarity). Regulates fast synaptic transmission mediated by glutamate.</text>
</comment>
<comment type="catalytic activity">
    <reaction>
        <text>L-seryl-[protein] + ATP = O-phospho-L-seryl-[protein] + ADP + H(+)</text>
        <dbReference type="Rhea" id="RHEA:17989"/>
        <dbReference type="Rhea" id="RHEA-COMP:9863"/>
        <dbReference type="Rhea" id="RHEA-COMP:11604"/>
        <dbReference type="ChEBI" id="CHEBI:15378"/>
        <dbReference type="ChEBI" id="CHEBI:29999"/>
        <dbReference type="ChEBI" id="CHEBI:30616"/>
        <dbReference type="ChEBI" id="CHEBI:83421"/>
        <dbReference type="ChEBI" id="CHEBI:456216"/>
        <dbReference type="EC" id="2.7.11.1"/>
    </reaction>
</comment>
<comment type="catalytic activity">
    <reaction>
        <text>L-threonyl-[protein] + ATP = O-phospho-L-threonyl-[protein] + ADP + H(+)</text>
        <dbReference type="Rhea" id="RHEA:46608"/>
        <dbReference type="Rhea" id="RHEA-COMP:11060"/>
        <dbReference type="Rhea" id="RHEA-COMP:11605"/>
        <dbReference type="ChEBI" id="CHEBI:15378"/>
        <dbReference type="ChEBI" id="CHEBI:30013"/>
        <dbReference type="ChEBI" id="CHEBI:30616"/>
        <dbReference type="ChEBI" id="CHEBI:61977"/>
        <dbReference type="ChEBI" id="CHEBI:456216"/>
        <dbReference type="EC" id="2.7.11.1"/>
    </reaction>
</comment>
<comment type="subunit">
    <text evidence="1">Monomer.</text>
</comment>
<comment type="subcellular location">
    <subcellularLocation>
        <location evidence="1">Cytoplasm</location>
    </subcellularLocation>
</comment>
<comment type="tissue specificity">
    <text evidence="6">Expressed in both the striatum and the neocortex.</text>
</comment>
<comment type="PTM">
    <text evidence="1">Autophosphorylated.</text>
</comment>
<comment type="miscellaneous">
    <text>Triazolodiamine 1 is a commercial name for 5-amino-3-([4-(aminosulfonyl)phenyl]amino)-N-(2,6-difluorophenyl)-1H-1,2,4-triazole-1-carbothioamide.</text>
</comment>
<comment type="similarity">
    <text evidence="7">Belongs to the protein kinase superfamily. CK1 Ser/Thr protein kinase family. Casein kinase I subfamily.</text>
</comment>
<gene>
    <name type="primary">Csnk1g3</name>
</gene>
<reference key="1">
    <citation type="journal article" date="2009" name="PLoS Biol.">
        <title>Lineage-specific biology revealed by a finished genome assembly of the mouse.</title>
        <authorList>
            <person name="Church D.M."/>
            <person name="Goodstadt L."/>
            <person name="Hillier L.W."/>
            <person name="Zody M.C."/>
            <person name="Goldstein S."/>
            <person name="She X."/>
            <person name="Bult C.J."/>
            <person name="Agarwala R."/>
            <person name="Cherry J.L."/>
            <person name="DiCuccio M."/>
            <person name="Hlavina W."/>
            <person name="Kapustin Y."/>
            <person name="Meric P."/>
            <person name="Maglott D."/>
            <person name="Birtle Z."/>
            <person name="Marques A.C."/>
            <person name="Graves T."/>
            <person name="Zhou S."/>
            <person name="Teague B."/>
            <person name="Potamousis K."/>
            <person name="Churas C."/>
            <person name="Place M."/>
            <person name="Herschleb J."/>
            <person name="Runnheim R."/>
            <person name="Forrest D."/>
            <person name="Amos-Landgraf J."/>
            <person name="Schwartz D.C."/>
            <person name="Cheng Z."/>
            <person name="Lindblad-Toh K."/>
            <person name="Eichler E.E."/>
            <person name="Ponting C.P."/>
        </authorList>
    </citation>
    <scope>NUCLEOTIDE SEQUENCE [LARGE SCALE GENOMIC DNA]</scope>
    <source>
        <strain>C57BL/6J</strain>
    </source>
</reference>
<reference key="2">
    <citation type="journal article" date="2005" name="Science">
        <title>The transcriptional landscape of the mammalian genome.</title>
        <authorList>
            <person name="Carninci P."/>
            <person name="Kasukawa T."/>
            <person name="Katayama S."/>
            <person name="Gough J."/>
            <person name="Frith M.C."/>
            <person name="Maeda N."/>
            <person name="Oyama R."/>
            <person name="Ravasi T."/>
            <person name="Lenhard B."/>
            <person name="Wells C."/>
            <person name="Kodzius R."/>
            <person name="Shimokawa K."/>
            <person name="Bajic V.B."/>
            <person name="Brenner S.E."/>
            <person name="Batalov S."/>
            <person name="Forrest A.R."/>
            <person name="Zavolan M."/>
            <person name="Davis M.J."/>
            <person name="Wilming L.G."/>
            <person name="Aidinis V."/>
            <person name="Allen J.E."/>
            <person name="Ambesi-Impiombato A."/>
            <person name="Apweiler R."/>
            <person name="Aturaliya R.N."/>
            <person name="Bailey T.L."/>
            <person name="Bansal M."/>
            <person name="Baxter L."/>
            <person name="Beisel K.W."/>
            <person name="Bersano T."/>
            <person name="Bono H."/>
            <person name="Chalk A.M."/>
            <person name="Chiu K.P."/>
            <person name="Choudhary V."/>
            <person name="Christoffels A."/>
            <person name="Clutterbuck D.R."/>
            <person name="Crowe M.L."/>
            <person name="Dalla E."/>
            <person name="Dalrymple B.P."/>
            <person name="de Bono B."/>
            <person name="Della Gatta G."/>
            <person name="di Bernardo D."/>
            <person name="Down T."/>
            <person name="Engstrom P."/>
            <person name="Fagiolini M."/>
            <person name="Faulkner G."/>
            <person name="Fletcher C.F."/>
            <person name="Fukushima T."/>
            <person name="Furuno M."/>
            <person name="Futaki S."/>
            <person name="Gariboldi M."/>
            <person name="Georgii-Hemming P."/>
            <person name="Gingeras T.R."/>
            <person name="Gojobori T."/>
            <person name="Green R.E."/>
            <person name="Gustincich S."/>
            <person name="Harbers M."/>
            <person name="Hayashi Y."/>
            <person name="Hensch T.K."/>
            <person name="Hirokawa N."/>
            <person name="Hill D."/>
            <person name="Huminiecki L."/>
            <person name="Iacono M."/>
            <person name="Ikeo K."/>
            <person name="Iwama A."/>
            <person name="Ishikawa T."/>
            <person name="Jakt M."/>
            <person name="Kanapin A."/>
            <person name="Katoh M."/>
            <person name="Kawasawa Y."/>
            <person name="Kelso J."/>
            <person name="Kitamura H."/>
            <person name="Kitano H."/>
            <person name="Kollias G."/>
            <person name="Krishnan S.P."/>
            <person name="Kruger A."/>
            <person name="Kummerfeld S.K."/>
            <person name="Kurochkin I.V."/>
            <person name="Lareau L.F."/>
            <person name="Lazarevic D."/>
            <person name="Lipovich L."/>
            <person name="Liu J."/>
            <person name="Liuni S."/>
            <person name="McWilliam S."/>
            <person name="Madan Babu M."/>
            <person name="Madera M."/>
            <person name="Marchionni L."/>
            <person name="Matsuda H."/>
            <person name="Matsuzawa S."/>
            <person name="Miki H."/>
            <person name="Mignone F."/>
            <person name="Miyake S."/>
            <person name="Morris K."/>
            <person name="Mottagui-Tabar S."/>
            <person name="Mulder N."/>
            <person name="Nakano N."/>
            <person name="Nakauchi H."/>
            <person name="Ng P."/>
            <person name="Nilsson R."/>
            <person name="Nishiguchi S."/>
            <person name="Nishikawa S."/>
            <person name="Nori F."/>
            <person name="Ohara O."/>
            <person name="Okazaki Y."/>
            <person name="Orlando V."/>
            <person name="Pang K.C."/>
            <person name="Pavan W.J."/>
            <person name="Pavesi G."/>
            <person name="Pesole G."/>
            <person name="Petrovsky N."/>
            <person name="Piazza S."/>
            <person name="Reed J."/>
            <person name="Reid J.F."/>
            <person name="Ring B.Z."/>
            <person name="Ringwald M."/>
            <person name="Rost B."/>
            <person name="Ruan Y."/>
            <person name="Salzberg S.L."/>
            <person name="Sandelin A."/>
            <person name="Schneider C."/>
            <person name="Schoenbach C."/>
            <person name="Sekiguchi K."/>
            <person name="Semple C.A."/>
            <person name="Seno S."/>
            <person name="Sessa L."/>
            <person name="Sheng Y."/>
            <person name="Shibata Y."/>
            <person name="Shimada H."/>
            <person name="Shimada K."/>
            <person name="Silva D."/>
            <person name="Sinclair B."/>
            <person name="Sperling S."/>
            <person name="Stupka E."/>
            <person name="Sugiura K."/>
            <person name="Sultana R."/>
            <person name="Takenaka Y."/>
            <person name="Taki K."/>
            <person name="Tammoja K."/>
            <person name="Tan S.L."/>
            <person name="Tang S."/>
            <person name="Taylor M.S."/>
            <person name="Tegner J."/>
            <person name="Teichmann S.A."/>
            <person name="Ueda H.R."/>
            <person name="van Nimwegen E."/>
            <person name="Verardo R."/>
            <person name="Wei C.L."/>
            <person name="Yagi K."/>
            <person name="Yamanishi H."/>
            <person name="Zabarovsky E."/>
            <person name="Zhu S."/>
            <person name="Zimmer A."/>
            <person name="Hide W."/>
            <person name="Bult C."/>
            <person name="Grimmond S.M."/>
            <person name="Teasdale R.D."/>
            <person name="Liu E.T."/>
            <person name="Brusic V."/>
            <person name="Quackenbush J."/>
            <person name="Wahlestedt C."/>
            <person name="Mattick J.S."/>
            <person name="Hume D.A."/>
            <person name="Kai C."/>
            <person name="Sasaki D."/>
            <person name="Tomaru Y."/>
            <person name="Fukuda S."/>
            <person name="Kanamori-Katayama M."/>
            <person name="Suzuki M."/>
            <person name="Aoki J."/>
            <person name="Arakawa T."/>
            <person name="Iida J."/>
            <person name="Imamura K."/>
            <person name="Itoh M."/>
            <person name="Kato T."/>
            <person name="Kawaji H."/>
            <person name="Kawagashira N."/>
            <person name="Kawashima T."/>
            <person name="Kojima M."/>
            <person name="Kondo S."/>
            <person name="Konno H."/>
            <person name="Nakano K."/>
            <person name="Ninomiya N."/>
            <person name="Nishio T."/>
            <person name="Okada M."/>
            <person name="Plessy C."/>
            <person name="Shibata K."/>
            <person name="Shiraki T."/>
            <person name="Suzuki S."/>
            <person name="Tagami M."/>
            <person name="Waki K."/>
            <person name="Watahiki A."/>
            <person name="Okamura-Oho Y."/>
            <person name="Suzuki H."/>
            <person name="Kawai J."/>
            <person name="Hayashizaki Y."/>
        </authorList>
    </citation>
    <scope>NUCLEOTIDE SEQUENCE [LARGE SCALE MRNA] OF 1-210 AND 238-424</scope>
    <source>
        <strain>C57BL/6J</strain>
        <tissue>Cerebellum</tissue>
        <tissue>Embryoid bodies</tissue>
    </source>
</reference>
<reference key="3">
    <citation type="journal article" date="2004" name="Nat. Methods">
        <title>Libraries enriched for alternatively spliced exons reveal splicing patterns in melanocytes and melanomas.</title>
        <authorList>
            <person name="Watahiki A."/>
            <person name="Waki K."/>
            <person name="Hayatsu N."/>
            <person name="Shiraki T."/>
            <person name="Kondo S."/>
            <person name="Nakamura M."/>
            <person name="Sasaki D."/>
            <person name="Arakawa T."/>
            <person name="Kawai J."/>
            <person name="Harbers M."/>
            <person name="Hayashizaki Y."/>
            <person name="Carninci P."/>
        </authorList>
    </citation>
    <scope>NUCLEOTIDE SEQUENCE [LARGE SCALE MRNA] OF 73-210</scope>
    <source>
        <tissue>Melanocyte</tissue>
    </source>
</reference>
<reference key="4">
    <citation type="journal article" date="2004" name="Genome Res.">
        <title>The status, quality, and expansion of the NIH full-length cDNA project: the Mammalian Gene Collection (MGC).</title>
        <authorList>
            <consortium name="The MGC Project Team"/>
        </authorList>
    </citation>
    <scope>NUCLEOTIDE SEQUENCE [LARGE SCALE MRNA] OF 89-424</scope>
    <source>
        <tissue>Eye</tissue>
    </source>
</reference>
<reference key="5">
    <citation type="journal article" date="2005" name="J. Neurosci.">
        <title>Physiological role for casein kinase 1 in glutamatergic synaptic transmission.</title>
        <authorList>
            <person name="Chergui K."/>
            <person name="Svenningsson P."/>
            <person name="Greengard P."/>
        </authorList>
    </citation>
    <scope>FUNCTION IN SYNAPTIC TRANSMISSION</scope>
    <scope>TISSUE SPECIFICITY</scope>
</reference>
<reference key="6">
    <citation type="journal article" date="2009" name="Immunity">
        <title>The phagosomal proteome in interferon-gamma-activated macrophages.</title>
        <authorList>
            <person name="Trost M."/>
            <person name="English L."/>
            <person name="Lemieux S."/>
            <person name="Courcelles M."/>
            <person name="Desjardins M."/>
            <person name="Thibault P."/>
        </authorList>
    </citation>
    <scope>IDENTIFICATION BY MASS SPECTROMETRY [LARGE SCALE ANALYSIS]</scope>
</reference>
<reference key="7">
    <citation type="journal article" date="2010" name="Cell">
        <title>A tissue-specific atlas of mouse protein phosphorylation and expression.</title>
        <authorList>
            <person name="Huttlin E.L."/>
            <person name="Jedrychowski M.P."/>
            <person name="Elias J.E."/>
            <person name="Goswami T."/>
            <person name="Rad R."/>
            <person name="Beausoleil S.A."/>
            <person name="Villen J."/>
            <person name="Haas W."/>
            <person name="Sowa M.E."/>
            <person name="Gygi S.P."/>
        </authorList>
    </citation>
    <scope>PHOSPHORYLATION [LARGE SCALE ANALYSIS] AT SER-382</scope>
    <scope>IDENTIFICATION BY MASS SPECTROMETRY [LARGE SCALE ANALYSIS]</scope>
    <source>
        <tissue>Brain</tissue>
        <tissue>Pancreas</tissue>
    </source>
</reference>